<protein>
    <recommendedName>
        <fullName evidence="1">D-ribose pyranase</fullName>
        <ecNumber evidence="1">5.4.99.62</ecNumber>
    </recommendedName>
</protein>
<feature type="chain" id="PRO_1000187153" description="D-ribose pyranase">
    <location>
        <begin position="1"/>
        <end position="131"/>
    </location>
</feature>
<feature type="active site" description="Proton donor" evidence="1">
    <location>
        <position position="20"/>
    </location>
</feature>
<feature type="binding site" evidence="1">
    <location>
        <position position="28"/>
    </location>
    <ligand>
        <name>substrate</name>
    </ligand>
</feature>
<feature type="binding site" evidence="1">
    <location>
        <position position="98"/>
    </location>
    <ligand>
        <name>substrate</name>
    </ligand>
</feature>
<feature type="binding site" evidence="1">
    <location>
        <begin position="120"/>
        <end position="122"/>
    </location>
    <ligand>
        <name>substrate</name>
    </ligand>
</feature>
<accession>B2GEJ1</accession>
<sequence length="131" mass="14676">MKKSGILNSEVASVVAGMGHMDWLSIGDAGMPVPMGTKKIDLCVDKELPTFMQILENVLKEMKIQKIYLADEIKDQNPEQLENIKQALPDVEIEFMPHTDLKKNLAKTHAFIRTGEMTPYSNIILESGVTF</sequence>
<evidence type="ECO:0000255" key="1">
    <source>
        <dbReference type="HAMAP-Rule" id="MF_01661"/>
    </source>
</evidence>
<keyword id="KW-0119">Carbohydrate metabolism</keyword>
<keyword id="KW-0963">Cytoplasm</keyword>
<keyword id="KW-0413">Isomerase</keyword>
<keyword id="KW-1185">Reference proteome</keyword>
<gene>
    <name evidence="1" type="primary">rbsD</name>
    <name type="ordered locus">LAF_1737</name>
</gene>
<reference key="1">
    <citation type="journal article" date="2008" name="DNA Res.">
        <title>Comparative genome analysis of Lactobacillus reuteri and Lactobacillus fermentum reveal a genomic island for reuterin and cobalamin production.</title>
        <authorList>
            <person name="Morita H."/>
            <person name="Toh H."/>
            <person name="Fukuda S."/>
            <person name="Horikawa H."/>
            <person name="Oshima K."/>
            <person name="Suzuki T."/>
            <person name="Murakami M."/>
            <person name="Hisamatsu S."/>
            <person name="Kato Y."/>
            <person name="Takizawa T."/>
            <person name="Fukuoka H."/>
            <person name="Yoshimura T."/>
            <person name="Itoh K."/>
            <person name="O'Sullivan D.J."/>
            <person name="McKay L.L."/>
            <person name="Ohno H."/>
            <person name="Kikuchi J."/>
            <person name="Masaoka T."/>
            <person name="Hattori M."/>
        </authorList>
    </citation>
    <scope>NUCLEOTIDE SEQUENCE [LARGE SCALE GENOMIC DNA]</scope>
    <source>
        <strain>NBRC 3956 / LMG 18251</strain>
    </source>
</reference>
<name>RBSD_LIMF3</name>
<organism>
    <name type="scientific">Limosilactobacillus fermentum (strain NBRC 3956 / LMG 18251)</name>
    <name type="common">Lactobacillus fermentum</name>
    <dbReference type="NCBI Taxonomy" id="334390"/>
    <lineage>
        <taxon>Bacteria</taxon>
        <taxon>Bacillati</taxon>
        <taxon>Bacillota</taxon>
        <taxon>Bacilli</taxon>
        <taxon>Lactobacillales</taxon>
        <taxon>Lactobacillaceae</taxon>
        <taxon>Limosilactobacillus</taxon>
    </lineage>
</organism>
<dbReference type="EC" id="5.4.99.62" evidence="1"/>
<dbReference type="EMBL" id="AP008937">
    <property type="protein sequence ID" value="BAG28073.1"/>
    <property type="molecule type" value="Genomic_DNA"/>
</dbReference>
<dbReference type="RefSeq" id="WP_012391750.1">
    <property type="nucleotide sequence ID" value="NC_010610.1"/>
</dbReference>
<dbReference type="SMR" id="B2GEJ1"/>
<dbReference type="KEGG" id="lfe:LAF_1737"/>
<dbReference type="eggNOG" id="COG1869">
    <property type="taxonomic scope" value="Bacteria"/>
</dbReference>
<dbReference type="HOGENOM" id="CLU_135498_0_0_9"/>
<dbReference type="UniPathway" id="UPA00916">
    <property type="reaction ID" value="UER00888"/>
</dbReference>
<dbReference type="Proteomes" id="UP000001697">
    <property type="component" value="Chromosome"/>
</dbReference>
<dbReference type="GO" id="GO:0005829">
    <property type="term" value="C:cytosol"/>
    <property type="evidence" value="ECO:0007669"/>
    <property type="project" value="TreeGrafter"/>
</dbReference>
<dbReference type="GO" id="GO:0062193">
    <property type="term" value="F:D-ribose pyranase activity"/>
    <property type="evidence" value="ECO:0007669"/>
    <property type="project" value="UniProtKB-EC"/>
</dbReference>
<dbReference type="GO" id="GO:0016872">
    <property type="term" value="F:intramolecular lyase activity"/>
    <property type="evidence" value="ECO:0007669"/>
    <property type="project" value="UniProtKB-UniRule"/>
</dbReference>
<dbReference type="GO" id="GO:0048029">
    <property type="term" value="F:monosaccharide binding"/>
    <property type="evidence" value="ECO:0007669"/>
    <property type="project" value="InterPro"/>
</dbReference>
<dbReference type="GO" id="GO:0019303">
    <property type="term" value="P:D-ribose catabolic process"/>
    <property type="evidence" value="ECO:0007669"/>
    <property type="project" value="UniProtKB-UniRule"/>
</dbReference>
<dbReference type="FunFam" id="3.40.1650.10:FF:000004">
    <property type="entry name" value="D-ribose pyranase"/>
    <property type="match status" value="1"/>
</dbReference>
<dbReference type="Gene3D" id="3.40.1650.10">
    <property type="entry name" value="RbsD-like domain"/>
    <property type="match status" value="1"/>
</dbReference>
<dbReference type="HAMAP" id="MF_01661">
    <property type="entry name" value="D_rib_pyranase"/>
    <property type="match status" value="1"/>
</dbReference>
<dbReference type="InterPro" id="IPR023064">
    <property type="entry name" value="D-ribose_pyranase"/>
</dbReference>
<dbReference type="InterPro" id="IPR023750">
    <property type="entry name" value="RbsD-like_sf"/>
</dbReference>
<dbReference type="InterPro" id="IPR007721">
    <property type="entry name" value="RbsD_FucU"/>
</dbReference>
<dbReference type="NCBIfam" id="NF008761">
    <property type="entry name" value="PRK11797.1"/>
    <property type="match status" value="1"/>
</dbReference>
<dbReference type="PANTHER" id="PTHR37831">
    <property type="entry name" value="D-RIBOSE PYRANASE"/>
    <property type="match status" value="1"/>
</dbReference>
<dbReference type="PANTHER" id="PTHR37831:SF1">
    <property type="entry name" value="D-RIBOSE PYRANASE"/>
    <property type="match status" value="1"/>
</dbReference>
<dbReference type="Pfam" id="PF05025">
    <property type="entry name" value="RbsD_FucU"/>
    <property type="match status" value="1"/>
</dbReference>
<dbReference type="SUPFAM" id="SSF102546">
    <property type="entry name" value="RbsD-like"/>
    <property type="match status" value="1"/>
</dbReference>
<comment type="function">
    <text evidence="1">Catalyzes the interconversion of beta-pyran and beta-furan forms of D-ribose.</text>
</comment>
<comment type="catalytic activity">
    <reaction evidence="1">
        <text>beta-D-ribopyranose = beta-D-ribofuranose</text>
        <dbReference type="Rhea" id="RHEA:25432"/>
        <dbReference type="ChEBI" id="CHEBI:27476"/>
        <dbReference type="ChEBI" id="CHEBI:47002"/>
        <dbReference type="EC" id="5.4.99.62"/>
    </reaction>
</comment>
<comment type="pathway">
    <text evidence="1">Carbohydrate metabolism; D-ribose degradation; D-ribose 5-phosphate from beta-D-ribopyranose: step 1/2.</text>
</comment>
<comment type="subunit">
    <text evidence="1">Homodecamer.</text>
</comment>
<comment type="subcellular location">
    <subcellularLocation>
        <location evidence="1">Cytoplasm</location>
    </subcellularLocation>
</comment>
<comment type="similarity">
    <text evidence="1">Belongs to the RbsD / FucU family. RbsD subfamily.</text>
</comment>
<proteinExistence type="inferred from homology"/>